<proteinExistence type="inferred from homology"/>
<feature type="chain" id="PRO_1000025033" description="2-isopropylmalate synthase">
    <location>
        <begin position="1"/>
        <end position="557"/>
    </location>
</feature>
<feature type="domain" description="Pyruvate carboxyltransferase" evidence="1">
    <location>
        <begin position="33"/>
        <end position="307"/>
    </location>
</feature>
<feature type="region of interest" description="Regulatory domain" evidence="1">
    <location>
        <begin position="439"/>
        <end position="557"/>
    </location>
</feature>
<feature type="binding site" evidence="1">
    <location>
        <position position="42"/>
    </location>
    <ligand>
        <name>Mg(2+)</name>
        <dbReference type="ChEBI" id="CHEBI:18420"/>
    </ligand>
</feature>
<feature type="binding site" evidence="1">
    <location>
        <position position="246"/>
    </location>
    <ligand>
        <name>Mg(2+)</name>
        <dbReference type="ChEBI" id="CHEBI:18420"/>
    </ligand>
</feature>
<feature type="binding site" evidence="1">
    <location>
        <position position="248"/>
    </location>
    <ligand>
        <name>Mg(2+)</name>
        <dbReference type="ChEBI" id="CHEBI:18420"/>
    </ligand>
</feature>
<feature type="binding site" evidence="1">
    <location>
        <position position="282"/>
    </location>
    <ligand>
        <name>Mg(2+)</name>
        <dbReference type="ChEBI" id="CHEBI:18420"/>
    </ligand>
</feature>
<name>LEU1_PSEE4</name>
<keyword id="KW-0028">Amino-acid biosynthesis</keyword>
<keyword id="KW-0100">Branched-chain amino acid biosynthesis</keyword>
<keyword id="KW-0963">Cytoplasm</keyword>
<keyword id="KW-0432">Leucine biosynthesis</keyword>
<keyword id="KW-0460">Magnesium</keyword>
<keyword id="KW-0479">Metal-binding</keyword>
<keyword id="KW-0808">Transferase</keyword>
<gene>
    <name evidence="1" type="primary">leuA</name>
    <name type="ordered locus">PSEEN4399</name>
</gene>
<reference key="1">
    <citation type="journal article" date="2006" name="Nat. Biotechnol.">
        <title>Complete genome sequence of the entomopathogenic and metabolically versatile soil bacterium Pseudomonas entomophila.</title>
        <authorList>
            <person name="Vodovar N."/>
            <person name="Vallenet D."/>
            <person name="Cruveiller S."/>
            <person name="Rouy Z."/>
            <person name="Barbe V."/>
            <person name="Acosta C."/>
            <person name="Cattolico L."/>
            <person name="Jubin C."/>
            <person name="Lajus A."/>
            <person name="Segurens B."/>
            <person name="Vacherie B."/>
            <person name="Wincker P."/>
            <person name="Weissenbach J."/>
            <person name="Lemaitre B."/>
            <person name="Medigue C."/>
            <person name="Boccard F."/>
        </authorList>
    </citation>
    <scope>NUCLEOTIDE SEQUENCE [LARGE SCALE GENOMIC DNA]</scope>
    <source>
        <strain>L48</strain>
    </source>
</reference>
<organism>
    <name type="scientific">Pseudomonas entomophila (strain L48)</name>
    <dbReference type="NCBI Taxonomy" id="384676"/>
    <lineage>
        <taxon>Bacteria</taxon>
        <taxon>Pseudomonadati</taxon>
        <taxon>Pseudomonadota</taxon>
        <taxon>Gammaproteobacteria</taxon>
        <taxon>Pseudomonadales</taxon>
        <taxon>Pseudomonadaceae</taxon>
        <taxon>Pseudomonas</taxon>
    </lineage>
</organism>
<dbReference type="EC" id="2.3.3.13" evidence="1"/>
<dbReference type="EMBL" id="CT573326">
    <property type="protein sequence ID" value="CAK17083.1"/>
    <property type="molecule type" value="Genomic_DNA"/>
</dbReference>
<dbReference type="RefSeq" id="WP_011535454.1">
    <property type="nucleotide sequence ID" value="NC_008027.1"/>
</dbReference>
<dbReference type="SMR" id="Q1I5K2"/>
<dbReference type="STRING" id="384676.PSEEN4399"/>
<dbReference type="GeneID" id="32807398"/>
<dbReference type="KEGG" id="pen:PSEEN4399"/>
<dbReference type="eggNOG" id="COG0119">
    <property type="taxonomic scope" value="Bacteria"/>
</dbReference>
<dbReference type="HOGENOM" id="CLU_004588_3_0_6"/>
<dbReference type="OrthoDB" id="9803573at2"/>
<dbReference type="UniPathway" id="UPA00048">
    <property type="reaction ID" value="UER00070"/>
</dbReference>
<dbReference type="Proteomes" id="UP000000658">
    <property type="component" value="Chromosome"/>
</dbReference>
<dbReference type="GO" id="GO:0005737">
    <property type="term" value="C:cytoplasm"/>
    <property type="evidence" value="ECO:0007669"/>
    <property type="project" value="UniProtKB-SubCell"/>
</dbReference>
<dbReference type="GO" id="GO:0003852">
    <property type="term" value="F:2-isopropylmalate synthase activity"/>
    <property type="evidence" value="ECO:0007669"/>
    <property type="project" value="UniProtKB-UniRule"/>
</dbReference>
<dbReference type="GO" id="GO:0003985">
    <property type="term" value="F:acetyl-CoA C-acetyltransferase activity"/>
    <property type="evidence" value="ECO:0007669"/>
    <property type="project" value="UniProtKB-UniRule"/>
</dbReference>
<dbReference type="GO" id="GO:0000287">
    <property type="term" value="F:magnesium ion binding"/>
    <property type="evidence" value="ECO:0007669"/>
    <property type="project" value="UniProtKB-UniRule"/>
</dbReference>
<dbReference type="GO" id="GO:0009098">
    <property type="term" value="P:L-leucine biosynthetic process"/>
    <property type="evidence" value="ECO:0007669"/>
    <property type="project" value="UniProtKB-UniRule"/>
</dbReference>
<dbReference type="CDD" id="cd07942">
    <property type="entry name" value="DRE_TIM_LeuA"/>
    <property type="match status" value="1"/>
</dbReference>
<dbReference type="FunFam" id="3.20.20.70:FF:000045">
    <property type="entry name" value="2-isopropylmalate synthase"/>
    <property type="match status" value="1"/>
</dbReference>
<dbReference type="Gene3D" id="3.30.160.270">
    <property type="match status" value="1"/>
</dbReference>
<dbReference type="Gene3D" id="3.20.20.70">
    <property type="entry name" value="Aldolase class I"/>
    <property type="match status" value="1"/>
</dbReference>
<dbReference type="HAMAP" id="MF_00572">
    <property type="entry name" value="LeuA_type2"/>
    <property type="match status" value="1"/>
</dbReference>
<dbReference type="InterPro" id="IPR013709">
    <property type="entry name" value="2-isopropylmalate_synth_dimer"/>
</dbReference>
<dbReference type="InterPro" id="IPR002034">
    <property type="entry name" value="AIPM/Hcit_synth_CS"/>
</dbReference>
<dbReference type="InterPro" id="IPR013785">
    <property type="entry name" value="Aldolase_TIM"/>
</dbReference>
<dbReference type="InterPro" id="IPR005668">
    <property type="entry name" value="IPM_Synthase"/>
</dbReference>
<dbReference type="InterPro" id="IPR054692">
    <property type="entry name" value="LeuA-like_post-cat"/>
</dbReference>
<dbReference type="InterPro" id="IPR036230">
    <property type="entry name" value="LeuA_allosteric_dom_sf"/>
</dbReference>
<dbReference type="InterPro" id="IPR039371">
    <property type="entry name" value="LeuA_N_DRE-TIM"/>
</dbReference>
<dbReference type="InterPro" id="IPR000891">
    <property type="entry name" value="PYR_CT"/>
</dbReference>
<dbReference type="NCBIfam" id="TIGR00970">
    <property type="entry name" value="leuA_yeast"/>
    <property type="match status" value="1"/>
</dbReference>
<dbReference type="NCBIfam" id="NF002991">
    <property type="entry name" value="PRK03739.1"/>
    <property type="match status" value="1"/>
</dbReference>
<dbReference type="PANTHER" id="PTHR46911">
    <property type="match status" value="1"/>
</dbReference>
<dbReference type="PANTHER" id="PTHR46911:SF1">
    <property type="entry name" value="2-ISOPROPYLMALATE SYNTHASE"/>
    <property type="match status" value="1"/>
</dbReference>
<dbReference type="Pfam" id="PF00682">
    <property type="entry name" value="HMGL-like"/>
    <property type="match status" value="1"/>
</dbReference>
<dbReference type="Pfam" id="PF22615">
    <property type="entry name" value="IPMS_D2"/>
    <property type="match status" value="1"/>
</dbReference>
<dbReference type="Pfam" id="PF08502">
    <property type="entry name" value="LeuA_dimer"/>
    <property type="match status" value="1"/>
</dbReference>
<dbReference type="SMART" id="SM00917">
    <property type="entry name" value="LeuA_dimer"/>
    <property type="match status" value="1"/>
</dbReference>
<dbReference type="SUPFAM" id="SSF110921">
    <property type="entry name" value="2-isopropylmalate synthase LeuA, allosteric (dimerisation) domain"/>
    <property type="match status" value="1"/>
</dbReference>
<dbReference type="SUPFAM" id="SSF51569">
    <property type="entry name" value="Aldolase"/>
    <property type="match status" value="1"/>
</dbReference>
<dbReference type="SUPFAM" id="SSF89000">
    <property type="entry name" value="post-HMGL domain-like"/>
    <property type="match status" value="1"/>
</dbReference>
<dbReference type="PROSITE" id="PS00815">
    <property type="entry name" value="AIPM_HOMOCIT_SYNTH_1"/>
    <property type="match status" value="1"/>
</dbReference>
<dbReference type="PROSITE" id="PS00816">
    <property type="entry name" value="AIPM_HOMOCIT_SYNTH_2"/>
    <property type="match status" value="1"/>
</dbReference>
<dbReference type="PROSITE" id="PS50991">
    <property type="entry name" value="PYR_CT"/>
    <property type="match status" value="1"/>
</dbReference>
<protein>
    <recommendedName>
        <fullName evidence="1">2-isopropylmalate synthase</fullName>
        <ecNumber evidence="1">2.3.3.13</ecNumber>
    </recommendedName>
    <alternativeName>
        <fullName evidence="1">Alpha-IPM synthase</fullName>
    </alternativeName>
    <alternativeName>
        <fullName evidence="1">Alpha-isopropylmalate synthase</fullName>
    </alternativeName>
</protein>
<comment type="function">
    <text evidence="1">Catalyzes the condensation of the acetyl group of acetyl-CoA with 3-methyl-2-oxobutanoate (2-ketoisovalerate) to form 3-carboxy-3-hydroxy-4-methylpentanoate (2-isopropylmalate).</text>
</comment>
<comment type="catalytic activity">
    <reaction evidence="1">
        <text>3-methyl-2-oxobutanoate + acetyl-CoA + H2O = (2S)-2-isopropylmalate + CoA + H(+)</text>
        <dbReference type="Rhea" id="RHEA:21524"/>
        <dbReference type="ChEBI" id="CHEBI:1178"/>
        <dbReference type="ChEBI" id="CHEBI:11851"/>
        <dbReference type="ChEBI" id="CHEBI:15377"/>
        <dbReference type="ChEBI" id="CHEBI:15378"/>
        <dbReference type="ChEBI" id="CHEBI:57287"/>
        <dbReference type="ChEBI" id="CHEBI:57288"/>
        <dbReference type="EC" id="2.3.3.13"/>
    </reaction>
</comment>
<comment type="cofactor">
    <cofactor evidence="1">
        <name>Mg(2+)</name>
        <dbReference type="ChEBI" id="CHEBI:18420"/>
    </cofactor>
</comment>
<comment type="pathway">
    <text evidence="1">Amino-acid biosynthesis; L-leucine biosynthesis; L-leucine from 3-methyl-2-oxobutanoate: step 1/4.</text>
</comment>
<comment type="subunit">
    <text evidence="1">Homodimer.</text>
</comment>
<comment type="subcellular location">
    <subcellularLocation>
        <location evidence="1">Cytoplasm</location>
    </subcellularLocation>
</comment>
<comment type="similarity">
    <text evidence="1">Belongs to the alpha-IPM synthase/homocitrate synthase family. LeuA type 2 subfamily.</text>
</comment>
<evidence type="ECO:0000255" key="1">
    <source>
        <dbReference type="HAMAP-Rule" id="MF_00572"/>
    </source>
</evidence>
<sequence length="557" mass="61817">MTMLKDPSKKYRAFPTIDLPDRTWPSKTITQAPIWCSSDLRDGNQSLIEPMDSEKKLRFWKTLVQVGVKEIEASFPSASQTDFDFVRTLIEDGHIPDDTTIQVLTQAREDLIARTFESLRGAKKAIVHLYNATCPSFRRIVFNQDKQGVKDIAVNAAKLFVKYAAQQPDTHWTFQYSPETFSATELEFAKEVCDAVIEVWNPTPEHKIILNLPATVEVATPNVYADQIEWFCRNINRRDSVIISLHTHNDRGTGIAATELGLMAGADRAEGCLFGNGERTGNVDLVTLALNLYTQGIDPQLDFSDIDGVRKVVEECNQLPVHPRHPYVGDLVHTAFSGSHQDAIRKGFAKQQEGELWEVPYLPIDPADIGRSYEAVIRVNSQSGKGGITYLLEQEYGISLPRRMQIEFSQVVQGETDRLGLEMTAEQIYKLLQKEYLQANAPYALVSHRLQEENGSSHVQVEVSGEGETTLHWHGKGNGALEALVAGLPVNVEIMDYNEHAIGAGTNAKAAAYIELRVAGGRPVHGVGIDENITTASFKALFSALNRSLSQQQAKAA</sequence>
<accession>Q1I5K2</accession>